<protein>
    <recommendedName>
        <fullName evidence="1">UPF0398 protein USA300HOU_1384</fullName>
    </recommendedName>
</protein>
<gene>
    <name type="ordered locus">USA300HOU_1384</name>
</gene>
<sequence length="187" mass="22191">MVKTVYVTGYKSFELNIFKDDAPEVHYLKQFIKHKIEQLLDEGLEWVLIQGQMGIELWTAEVVIELQRTYDSLKFAVITPFQGHTEKWNEHNQSKYANIIKHADYVDSIFHTSYQGPFQFKQADQFMLEHSDQTLLIYDEEQEASPKFFKQMLVDFMDKTNYTCDIVTFDELTAFINDLQWSEDQSF</sequence>
<organism>
    <name type="scientific">Staphylococcus aureus (strain USA300 / TCH1516)</name>
    <dbReference type="NCBI Taxonomy" id="451516"/>
    <lineage>
        <taxon>Bacteria</taxon>
        <taxon>Bacillati</taxon>
        <taxon>Bacillota</taxon>
        <taxon>Bacilli</taxon>
        <taxon>Bacillales</taxon>
        <taxon>Staphylococcaceae</taxon>
        <taxon>Staphylococcus</taxon>
    </lineage>
</organism>
<reference key="1">
    <citation type="journal article" date="2007" name="BMC Microbiol.">
        <title>Subtle genetic changes enhance virulence of methicillin resistant and sensitive Staphylococcus aureus.</title>
        <authorList>
            <person name="Highlander S.K."/>
            <person name="Hulten K.G."/>
            <person name="Qin X."/>
            <person name="Jiang H."/>
            <person name="Yerrapragada S."/>
            <person name="Mason E.O. Jr."/>
            <person name="Shang Y."/>
            <person name="Williams T.M."/>
            <person name="Fortunov R.M."/>
            <person name="Liu Y."/>
            <person name="Igboeli O."/>
            <person name="Petrosino J."/>
            <person name="Tirumalai M."/>
            <person name="Uzman A."/>
            <person name="Fox G.E."/>
            <person name="Cardenas A.M."/>
            <person name="Muzny D.M."/>
            <person name="Hemphill L."/>
            <person name="Ding Y."/>
            <person name="Dugan S."/>
            <person name="Blyth P.R."/>
            <person name="Buhay C.J."/>
            <person name="Dinh H.H."/>
            <person name="Hawes A.C."/>
            <person name="Holder M."/>
            <person name="Kovar C.L."/>
            <person name="Lee S.L."/>
            <person name="Liu W."/>
            <person name="Nazareth L.V."/>
            <person name="Wang Q."/>
            <person name="Zhou J."/>
            <person name="Kaplan S.L."/>
            <person name="Weinstock G.M."/>
        </authorList>
    </citation>
    <scope>NUCLEOTIDE SEQUENCE [LARGE SCALE GENOMIC DNA]</scope>
    <source>
        <strain>USA300 / TCH1516</strain>
    </source>
</reference>
<accession>A8Z426</accession>
<name>Y1384_STAAT</name>
<comment type="similarity">
    <text evidence="1">Belongs to the UPF0398 family.</text>
</comment>
<feature type="chain" id="PRO_1000087886" description="UPF0398 protein USA300HOU_1384">
    <location>
        <begin position="1"/>
        <end position="187"/>
    </location>
</feature>
<dbReference type="EMBL" id="CP000730">
    <property type="protein sequence ID" value="ABX29394.1"/>
    <property type="molecule type" value="Genomic_DNA"/>
</dbReference>
<dbReference type="RefSeq" id="WP_000241308.1">
    <property type="nucleotide sequence ID" value="NC_010079.1"/>
</dbReference>
<dbReference type="SMR" id="A8Z426"/>
<dbReference type="KEGG" id="sax:USA300HOU_1384"/>
<dbReference type="HOGENOM" id="CLU_105319_0_0_9"/>
<dbReference type="BioCyc" id="SAUR451516-HMP:GTV5-1403-MONOMER"/>
<dbReference type="Gene3D" id="3.40.50.450">
    <property type="match status" value="1"/>
</dbReference>
<dbReference type="HAMAP" id="MF_01575">
    <property type="entry name" value="UPF0398"/>
    <property type="match status" value="1"/>
</dbReference>
<dbReference type="InterPro" id="IPR010697">
    <property type="entry name" value="YspA"/>
</dbReference>
<dbReference type="NCBIfam" id="NF010181">
    <property type="entry name" value="PRK13660.1"/>
    <property type="match status" value="1"/>
</dbReference>
<dbReference type="PANTHER" id="PTHR38440:SF1">
    <property type="entry name" value="UPF0398 PROTEIN SPR0331"/>
    <property type="match status" value="1"/>
</dbReference>
<dbReference type="PANTHER" id="PTHR38440">
    <property type="entry name" value="UPF0398 PROTEIN YPSA"/>
    <property type="match status" value="1"/>
</dbReference>
<dbReference type="Pfam" id="PF06908">
    <property type="entry name" value="YpsA"/>
    <property type="match status" value="1"/>
</dbReference>
<dbReference type="PIRSF" id="PIRSF021290">
    <property type="entry name" value="DUF1273"/>
    <property type="match status" value="1"/>
</dbReference>
<dbReference type="SUPFAM" id="SSF102405">
    <property type="entry name" value="MCP/YpsA-like"/>
    <property type="match status" value="1"/>
</dbReference>
<proteinExistence type="inferred from homology"/>
<evidence type="ECO:0000255" key="1">
    <source>
        <dbReference type="HAMAP-Rule" id="MF_01575"/>
    </source>
</evidence>